<dbReference type="EC" id="7.1.1.-" evidence="1"/>
<dbReference type="EMBL" id="BX548175">
    <property type="protein sequence ID" value="CAE21529.1"/>
    <property type="molecule type" value="Genomic_DNA"/>
</dbReference>
<dbReference type="RefSeq" id="WP_011130722.1">
    <property type="nucleotide sequence ID" value="NC_005071.1"/>
</dbReference>
<dbReference type="SMR" id="Q7V626"/>
<dbReference type="KEGG" id="pmt:PMT_1354"/>
<dbReference type="eggNOG" id="COG1007">
    <property type="taxonomic scope" value="Bacteria"/>
</dbReference>
<dbReference type="HOGENOM" id="CLU_007100_1_2_3"/>
<dbReference type="OrthoDB" id="9811718at2"/>
<dbReference type="Proteomes" id="UP000001423">
    <property type="component" value="Chromosome"/>
</dbReference>
<dbReference type="GO" id="GO:0031676">
    <property type="term" value="C:plasma membrane-derived thylakoid membrane"/>
    <property type="evidence" value="ECO:0007669"/>
    <property type="project" value="UniProtKB-SubCell"/>
</dbReference>
<dbReference type="GO" id="GO:0008137">
    <property type="term" value="F:NADH dehydrogenase (ubiquinone) activity"/>
    <property type="evidence" value="ECO:0007669"/>
    <property type="project" value="InterPro"/>
</dbReference>
<dbReference type="GO" id="GO:0048038">
    <property type="term" value="F:quinone binding"/>
    <property type="evidence" value="ECO:0007669"/>
    <property type="project" value="UniProtKB-KW"/>
</dbReference>
<dbReference type="GO" id="GO:0042773">
    <property type="term" value="P:ATP synthesis coupled electron transport"/>
    <property type="evidence" value="ECO:0007669"/>
    <property type="project" value="InterPro"/>
</dbReference>
<dbReference type="GO" id="GO:0019684">
    <property type="term" value="P:photosynthesis, light reaction"/>
    <property type="evidence" value="ECO:0007669"/>
    <property type="project" value="UniProtKB-UniRule"/>
</dbReference>
<dbReference type="HAMAP" id="MF_00445">
    <property type="entry name" value="NDH1_NuoN_1"/>
    <property type="match status" value="1"/>
</dbReference>
<dbReference type="InterPro" id="IPR010096">
    <property type="entry name" value="NADH-Q_OxRdtase_suN/2"/>
</dbReference>
<dbReference type="InterPro" id="IPR001750">
    <property type="entry name" value="ND/Mrp_TM"/>
</dbReference>
<dbReference type="NCBIfam" id="TIGR01770">
    <property type="entry name" value="NDH_I_N"/>
    <property type="match status" value="1"/>
</dbReference>
<dbReference type="NCBIfam" id="NF002701">
    <property type="entry name" value="PRK02504.1"/>
    <property type="match status" value="1"/>
</dbReference>
<dbReference type="PANTHER" id="PTHR22773">
    <property type="entry name" value="NADH DEHYDROGENASE"/>
    <property type="match status" value="1"/>
</dbReference>
<dbReference type="Pfam" id="PF00361">
    <property type="entry name" value="Proton_antipo_M"/>
    <property type="match status" value="1"/>
</dbReference>
<comment type="function">
    <text evidence="1">NDH-1 shuttles electrons from an unknown electron donor, via FMN and iron-sulfur (Fe-S) centers, to quinones in the respiratory and/or the photosynthetic chain. The immediate electron acceptor for the enzyme in this species is believed to be plastoquinone. Couples the redox reaction to proton translocation, and thus conserves the redox energy in a proton gradient. Cyanobacterial NDH-1 also plays a role in inorganic carbon-concentration.</text>
</comment>
<comment type="catalytic activity">
    <reaction evidence="1">
        <text>a plastoquinone + NADH + (n+1) H(+)(in) = a plastoquinol + NAD(+) + n H(+)(out)</text>
        <dbReference type="Rhea" id="RHEA:42608"/>
        <dbReference type="Rhea" id="RHEA-COMP:9561"/>
        <dbReference type="Rhea" id="RHEA-COMP:9562"/>
        <dbReference type="ChEBI" id="CHEBI:15378"/>
        <dbReference type="ChEBI" id="CHEBI:17757"/>
        <dbReference type="ChEBI" id="CHEBI:57540"/>
        <dbReference type="ChEBI" id="CHEBI:57945"/>
        <dbReference type="ChEBI" id="CHEBI:62192"/>
    </reaction>
</comment>
<comment type="catalytic activity">
    <reaction evidence="1">
        <text>a plastoquinone + NADPH + (n+1) H(+)(in) = a plastoquinol + NADP(+) + n H(+)(out)</text>
        <dbReference type="Rhea" id="RHEA:42612"/>
        <dbReference type="Rhea" id="RHEA-COMP:9561"/>
        <dbReference type="Rhea" id="RHEA-COMP:9562"/>
        <dbReference type="ChEBI" id="CHEBI:15378"/>
        <dbReference type="ChEBI" id="CHEBI:17757"/>
        <dbReference type="ChEBI" id="CHEBI:57783"/>
        <dbReference type="ChEBI" id="CHEBI:58349"/>
        <dbReference type="ChEBI" id="CHEBI:62192"/>
    </reaction>
</comment>
<comment type="subunit">
    <text evidence="1">NDH-1 can be composed of about 15 different subunits; different subcomplexes with different compositions have been identified which probably have different functions.</text>
</comment>
<comment type="subcellular location">
    <subcellularLocation>
        <location evidence="1">Cellular thylakoid membrane</location>
        <topology evidence="1">Multi-pass membrane protein</topology>
    </subcellularLocation>
</comment>
<comment type="similarity">
    <text evidence="1">Belongs to the complex I subunit 2 family.</text>
</comment>
<feature type="chain" id="PRO_0000225355" description="NAD(P)H-quinone oxidoreductase subunit 2">
    <location>
        <begin position="1"/>
        <end position="523"/>
    </location>
</feature>
<feature type="transmembrane region" description="Helical" evidence="1">
    <location>
        <begin position="29"/>
        <end position="49"/>
    </location>
</feature>
<feature type="transmembrane region" description="Helical" evidence="1">
    <location>
        <begin position="57"/>
        <end position="77"/>
    </location>
</feature>
<feature type="transmembrane region" description="Helical" evidence="1">
    <location>
        <begin position="94"/>
        <end position="114"/>
    </location>
</feature>
<feature type="transmembrane region" description="Helical" evidence="1">
    <location>
        <begin position="123"/>
        <end position="143"/>
    </location>
</feature>
<feature type="transmembrane region" description="Helical" evidence="1">
    <location>
        <begin position="147"/>
        <end position="167"/>
    </location>
</feature>
<feature type="transmembrane region" description="Helical" evidence="1">
    <location>
        <begin position="182"/>
        <end position="202"/>
    </location>
</feature>
<feature type="transmembrane region" description="Helical" evidence="1">
    <location>
        <begin position="223"/>
        <end position="243"/>
    </location>
</feature>
<feature type="transmembrane region" description="Helical" evidence="1">
    <location>
        <begin position="255"/>
        <end position="275"/>
    </location>
</feature>
<feature type="transmembrane region" description="Helical" evidence="1">
    <location>
        <begin position="291"/>
        <end position="311"/>
    </location>
</feature>
<feature type="transmembrane region" description="Helical" evidence="1">
    <location>
        <begin position="317"/>
        <end position="337"/>
    </location>
</feature>
<feature type="transmembrane region" description="Helical" evidence="1">
    <location>
        <begin position="345"/>
        <end position="365"/>
    </location>
</feature>
<feature type="transmembrane region" description="Helical" evidence="1">
    <location>
        <begin position="389"/>
        <end position="409"/>
    </location>
</feature>
<feature type="transmembrane region" description="Helical" evidence="1">
    <location>
        <begin position="424"/>
        <end position="444"/>
    </location>
</feature>
<feature type="transmembrane region" description="Helical" evidence="1">
    <location>
        <begin position="477"/>
        <end position="497"/>
    </location>
</feature>
<organism>
    <name type="scientific">Prochlorococcus marinus (strain MIT 9313)</name>
    <dbReference type="NCBI Taxonomy" id="74547"/>
    <lineage>
        <taxon>Bacteria</taxon>
        <taxon>Bacillati</taxon>
        <taxon>Cyanobacteriota</taxon>
        <taxon>Cyanophyceae</taxon>
        <taxon>Synechococcales</taxon>
        <taxon>Prochlorococcaceae</taxon>
        <taxon>Prochlorococcus</taxon>
    </lineage>
</organism>
<protein>
    <recommendedName>
        <fullName evidence="1">NAD(P)H-quinone oxidoreductase subunit 2</fullName>
        <ecNumber evidence="1">7.1.1.-</ecNumber>
    </recommendedName>
    <alternativeName>
        <fullName evidence="1">NAD(P)H dehydrogenase subunit 2</fullName>
    </alternativeName>
    <alternativeName>
        <fullName evidence="1">NADH-plastoquinone oxidoreductase subunit 2</fullName>
    </alternativeName>
    <alternativeName>
        <fullName evidence="1">NDH-1, subunit 2</fullName>
    </alternativeName>
</protein>
<evidence type="ECO:0000255" key="1">
    <source>
        <dbReference type="HAMAP-Rule" id="MF_00445"/>
    </source>
</evidence>
<proteinExistence type="inferred from homology"/>
<sequence length="523" mass="54837">MPDMGVFLLATQAVAPPGELLNLALNAGAIAPEGAVLVAMLATLLVDLAGEQAAARWVPPICYAGLGTALVLLAQQWNAPLEPSFLGAFLADNLAISFRAVVALSTLLSLLISWRYAEQSGTPIGEYAAILLAATLGAMLLCGSTDLVSVFVSLETLSVASYLLAGYMKRDARSSEAALKYLLVGSAAAAVFLYGASLLYGLSGTTSLQAIGLALLTSPTPLAALSLVFVLATVAFKIAAVPFHQWTPDVYEGSPTPVVAFLSVGSKAAGFALALRLLVGCFGAFDNQWKLLFTVLAVLSMTLGNVVALAQTSMKRMLAYSSIGQAGFVMIGLVCGTEDGFAAMVLYMAAYLFMNLGAFACIILFSIRTGSDRISDYAGLYQKDPLITLGLSLCLLSLGGIPPMLGFFGKIYLFFAGWADHQYLLVVVGLVTSVVSIYYYISVIKMMVVKEPKEASDVVKSYPSIKWSTIGMPPLRIALVGCVVVTAVGGILSNPLFQWANNAVAGTPLLQEAIALGSQRSIG</sequence>
<gene>
    <name evidence="1" type="primary">ndhB</name>
    <name type="ordered locus">PMT_1354</name>
</gene>
<accession>Q7V626</accession>
<reference key="1">
    <citation type="journal article" date="2003" name="Nature">
        <title>Genome divergence in two Prochlorococcus ecotypes reflects oceanic niche differentiation.</title>
        <authorList>
            <person name="Rocap G."/>
            <person name="Larimer F.W."/>
            <person name="Lamerdin J.E."/>
            <person name="Malfatti S."/>
            <person name="Chain P."/>
            <person name="Ahlgren N.A."/>
            <person name="Arellano A."/>
            <person name="Coleman M."/>
            <person name="Hauser L."/>
            <person name="Hess W.R."/>
            <person name="Johnson Z.I."/>
            <person name="Land M.L."/>
            <person name="Lindell D."/>
            <person name="Post A.F."/>
            <person name="Regala W."/>
            <person name="Shah M."/>
            <person name="Shaw S.L."/>
            <person name="Steglich C."/>
            <person name="Sullivan M.B."/>
            <person name="Ting C.S."/>
            <person name="Tolonen A."/>
            <person name="Webb E.A."/>
            <person name="Zinser E.R."/>
            <person name="Chisholm S.W."/>
        </authorList>
    </citation>
    <scope>NUCLEOTIDE SEQUENCE [LARGE SCALE GENOMIC DNA]</scope>
    <source>
        <strain>MIT 9313</strain>
    </source>
</reference>
<name>NU2C_PROMM</name>
<keyword id="KW-0472">Membrane</keyword>
<keyword id="KW-0520">NAD</keyword>
<keyword id="KW-0521">NADP</keyword>
<keyword id="KW-0618">Plastoquinone</keyword>
<keyword id="KW-0874">Quinone</keyword>
<keyword id="KW-1185">Reference proteome</keyword>
<keyword id="KW-0793">Thylakoid</keyword>
<keyword id="KW-1278">Translocase</keyword>
<keyword id="KW-0812">Transmembrane</keyword>
<keyword id="KW-1133">Transmembrane helix</keyword>
<keyword id="KW-0813">Transport</keyword>